<protein>
    <recommendedName>
        <fullName evidence="1">Large ribosomal subunit protein bL21</fullName>
    </recommendedName>
    <alternativeName>
        <fullName evidence="2">50S ribosomal protein L21</fullName>
    </alternativeName>
</protein>
<proteinExistence type="inferred from homology"/>
<name>RL21_PSEA6</name>
<feature type="chain" id="PRO_0000270708" description="Large ribosomal subunit protein bL21">
    <location>
        <begin position="1"/>
        <end position="103"/>
    </location>
</feature>
<organism>
    <name type="scientific">Pseudoalteromonas atlantica (strain T6c / ATCC BAA-1087)</name>
    <dbReference type="NCBI Taxonomy" id="3042615"/>
    <lineage>
        <taxon>Bacteria</taxon>
        <taxon>Pseudomonadati</taxon>
        <taxon>Pseudomonadota</taxon>
        <taxon>Gammaproteobacteria</taxon>
        <taxon>Alteromonadales</taxon>
        <taxon>Alteromonadaceae</taxon>
        <taxon>Paraglaciecola</taxon>
    </lineage>
</organism>
<sequence length="103" mass="11410">MYAVFQSGGKQHRVAEGQTVRLEKIEVAPGESVEFGDILMVSNGEDVKIGTPFVSGGKVTAEVVTHGRGEKVKIVKFRRRKHSRTQMGHRQWFTEVKITGISA</sequence>
<reference key="1">
    <citation type="submission" date="2006-06" db="EMBL/GenBank/DDBJ databases">
        <title>Complete sequence of Pseudoalteromonas atlantica T6c.</title>
        <authorList>
            <consortium name="US DOE Joint Genome Institute"/>
            <person name="Copeland A."/>
            <person name="Lucas S."/>
            <person name="Lapidus A."/>
            <person name="Barry K."/>
            <person name="Detter J.C."/>
            <person name="Glavina del Rio T."/>
            <person name="Hammon N."/>
            <person name="Israni S."/>
            <person name="Dalin E."/>
            <person name="Tice H."/>
            <person name="Pitluck S."/>
            <person name="Saunders E."/>
            <person name="Brettin T."/>
            <person name="Bruce D."/>
            <person name="Han C."/>
            <person name="Tapia R."/>
            <person name="Gilna P."/>
            <person name="Schmutz J."/>
            <person name="Larimer F."/>
            <person name="Land M."/>
            <person name="Hauser L."/>
            <person name="Kyrpides N."/>
            <person name="Kim E."/>
            <person name="Karls A.C."/>
            <person name="Bartlett D."/>
            <person name="Higgins B.P."/>
            <person name="Richardson P."/>
        </authorList>
    </citation>
    <scope>NUCLEOTIDE SEQUENCE [LARGE SCALE GENOMIC DNA]</scope>
    <source>
        <strain>T6c / ATCC BAA-1087</strain>
    </source>
</reference>
<comment type="function">
    <text evidence="1">This protein binds to 23S rRNA in the presence of protein L20.</text>
</comment>
<comment type="subunit">
    <text evidence="1">Part of the 50S ribosomal subunit. Contacts protein L20.</text>
</comment>
<comment type="similarity">
    <text evidence="1">Belongs to the bacterial ribosomal protein bL21 family.</text>
</comment>
<accession>Q15PE8</accession>
<keyword id="KW-0687">Ribonucleoprotein</keyword>
<keyword id="KW-0689">Ribosomal protein</keyword>
<keyword id="KW-0694">RNA-binding</keyword>
<keyword id="KW-0699">rRNA-binding</keyword>
<gene>
    <name evidence="1" type="primary">rplU</name>
    <name type="ordered locus">Patl_3738</name>
</gene>
<dbReference type="EMBL" id="CP000388">
    <property type="protein sequence ID" value="ABG42240.1"/>
    <property type="molecule type" value="Genomic_DNA"/>
</dbReference>
<dbReference type="RefSeq" id="WP_006990965.1">
    <property type="nucleotide sequence ID" value="NC_008228.1"/>
</dbReference>
<dbReference type="SMR" id="Q15PE8"/>
<dbReference type="STRING" id="342610.Patl_3738"/>
<dbReference type="KEGG" id="pat:Patl_3738"/>
<dbReference type="eggNOG" id="COG0261">
    <property type="taxonomic scope" value="Bacteria"/>
</dbReference>
<dbReference type="HOGENOM" id="CLU_061463_3_3_6"/>
<dbReference type="OrthoDB" id="9813334at2"/>
<dbReference type="Proteomes" id="UP000001981">
    <property type="component" value="Chromosome"/>
</dbReference>
<dbReference type="GO" id="GO:0005737">
    <property type="term" value="C:cytoplasm"/>
    <property type="evidence" value="ECO:0007669"/>
    <property type="project" value="UniProtKB-ARBA"/>
</dbReference>
<dbReference type="GO" id="GO:1990904">
    <property type="term" value="C:ribonucleoprotein complex"/>
    <property type="evidence" value="ECO:0007669"/>
    <property type="project" value="UniProtKB-KW"/>
</dbReference>
<dbReference type="GO" id="GO:0005840">
    <property type="term" value="C:ribosome"/>
    <property type="evidence" value="ECO:0007669"/>
    <property type="project" value="UniProtKB-KW"/>
</dbReference>
<dbReference type="GO" id="GO:0019843">
    <property type="term" value="F:rRNA binding"/>
    <property type="evidence" value="ECO:0007669"/>
    <property type="project" value="UniProtKB-UniRule"/>
</dbReference>
<dbReference type="GO" id="GO:0003735">
    <property type="term" value="F:structural constituent of ribosome"/>
    <property type="evidence" value="ECO:0007669"/>
    <property type="project" value="InterPro"/>
</dbReference>
<dbReference type="GO" id="GO:0006412">
    <property type="term" value="P:translation"/>
    <property type="evidence" value="ECO:0007669"/>
    <property type="project" value="UniProtKB-UniRule"/>
</dbReference>
<dbReference type="HAMAP" id="MF_01363">
    <property type="entry name" value="Ribosomal_bL21"/>
    <property type="match status" value="1"/>
</dbReference>
<dbReference type="InterPro" id="IPR028909">
    <property type="entry name" value="bL21-like"/>
</dbReference>
<dbReference type="InterPro" id="IPR036164">
    <property type="entry name" value="bL21-like_sf"/>
</dbReference>
<dbReference type="InterPro" id="IPR001787">
    <property type="entry name" value="Ribosomal_bL21"/>
</dbReference>
<dbReference type="InterPro" id="IPR018258">
    <property type="entry name" value="Ribosomal_bL21_CS"/>
</dbReference>
<dbReference type="NCBIfam" id="TIGR00061">
    <property type="entry name" value="L21"/>
    <property type="match status" value="1"/>
</dbReference>
<dbReference type="PANTHER" id="PTHR21349">
    <property type="entry name" value="50S RIBOSOMAL PROTEIN L21"/>
    <property type="match status" value="1"/>
</dbReference>
<dbReference type="PANTHER" id="PTHR21349:SF0">
    <property type="entry name" value="LARGE RIBOSOMAL SUBUNIT PROTEIN BL21M"/>
    <property type="match status" value="1"/>
</dbReference>
<dbReference type="Pfam" id="PF00829">
    <property type="entry name" value="Ribosomal_L21p"/>
    <property type="match status" value="1"/>
</dbReference>
<dbReference type="SUPFAM" id="SSF141091">
    <property type="entry name" value="L21p-like"/>
    <property type="match status" value="1"/>
</dbReference>
<dbReference type="PROSITE" id="PS01169">
    <property type="entry name" value="RIBOSOMAL_L21"/>
    <property type="match status" value="1"/>
</dbReference>
<evidence type="ECO:0000255" key="1">
    <source>
        <dbReference type="HAMAP-Rule" id="MF_01363"/>
    </source>
</evidence>
<evidence type="ECO:0000305" key="2"/>